<proteinExistence type="inferred from homology"/>
<protein>
    <recommendedName>
        <fullName>Deubiquitinase and deneddylase Dub1</fullName>
        <shortName>ChlaDub1</shortName>
        <ecNumber>3.4.22.-</ecNumber>
    </recommendedName>
</protein>
<dbReference type="EC" id="3.4.22.-"/>
<dbReference type="EMBL" id="FM872308">
    <property type="protein sequence ID" value="CAX11332.1"/>
    <property type="molecule type" value="Genomic_DNA"/>
</dbReference>
<dbReference type="RefSeq" id="WP_012728021.1">
    <property type="nucleotide sequence ID" value="NC_012686.1"/>
</dbReference>
<dbReference type="SMR" id="C4PQR0"/>
<dbReference type="MEROPS" id="C48.032"/>
<dbReference type="KEGG" id="ctj:JALI_8791"/>
<dbReference type="HOGENOM" id="CLU_067510_0_0_0"/>
<dbReference type="GO" id="GO:0005576">
    <property type="term" value="C:extracellular region"/>
    <property type="evidence" value="ECO:0000250"/>
    <property type="project" value="UniProtKB"/>
</dbReference>
<dbReference type="GO" id="GO:0043657">
    <property type="term" value="C:host cell"/>
    <property type="evidence" value="ECO:0007669"/>
    <property type="project" value="UniProtKB-SubCell"/>
</dbReference>
<dbReference type="GO" id="GO:0016020">
    <property type="term" value="C:membrane"/>
    <property type="evidence" value="ECO:0007669"/>
    <property type="project" value="UniProtKB-SubCell"/>
</dbReference>
<dbReference type="GO" id="GO:0004843">
    <property type="term" value="F:cysteine-type deubiquitinase activity"/>
    <property type="evidence" value="ECO:0000250"/>
    <property type="project" value="UniProtKB"/>
</dbReference>
<dbReference type="GO" id="GO:0019784">
    <property type="term" value="F:deNEDDylase activity"/>
    <property type="evidence" value="ECO:0000250"/>
    <property type="project" value="UniProtKB"/>
</dbReference>
<dbReference type="GO" id="GO:0000338">
    <property type="term" value="P:protein deneddylation"/>
    <property type="evidence" value="ECO:0000250"/>
    <property type="project" value="UniProtKB"/>
</dbReference>
<dbReference type="GO" id="GO:0016579">
    <property type="term" value="P:protein deubiquitination"/>
    <property type="evidence" value="ECO:0000250"/>
    <property type="project" value="UniProtKB"/>
</dbReference>
<dbReference type="GO" id="GO:0006508">
    <property type="term" value="P:proteolysis"/>
    <property type="evidence" value="ECO:0007669"/>
    <property type="project" value="UniProtKB-KW"/>
</dbReference>
<dbReference type="FunFam" id="3.40.395.10:FF:000016">
    <property type="entry name" value="Deubiquitinase and deneddylase Dub1"/>
    <property type="match status" value="1"/>
</dbReference>
<dbReference type="Gene3D" id="3.40.395.10">
    <property type="entry name" value="Adenoviral Proteinase, Chain A"/>
    <property type="match status" value="1"/>
</dbReference>
<dbReference type="InterPro" id="IPR038765">
    <property type="entry name" value="Papain-like_cys_pep_sf"/>
</dbReference>
<dbReference type="InterPro" id="IPR003653">
    <property type="entry name" value="Peptidase_C48_C"/>
</dbReference>
<dbReference type="Pfam" id="PF02902">
    <property type="entry name" value="Peptidase_C48"/>
    <property type="match status" value="1"/>
</dbReference>
<dbReference type="PRINTS" id="PR01217">
    <property type="entry name" value="PRICHEXTENSN"/>
</dbReference>
<dbReference type="SUPFAM" id="SSF54001">
    <property type="entry name" value="Cysteine proteinases"/>
    <property type="match status" value="1"/>
</dbReference>
<organism>
    <name type="scientific">Chlamydia trachomatis serovar B (strain Jali20/OT)</name>
    <dbReference type="NCBI Taxonomy" id="580049"/>
    <lineage>
        <taxon>Bacteria</taxon>
        <taxon>Pseudomonadati</taxon>
        <taxon>Chlamydiota</taxon>
        <taxon>Chlamydiia</taxon>
        <taxon>Chlamydiales</taxon>
        <taxon>Chlamydiaceae</taxon>
        <taxon>Chlamydia/Chlamydophila group</taxon>
        <taxon>Chlamydia</taxon>
    </lineage>
</organism>
<comment type="function">
    <text evidence="1">Effector proteins function to alter host cell physiology and promote bacterial survival in host tissues. This protease possesses deubiquitinating and deneddylating activities (By similarity).</text>
</comment>
<comment type="subcellular location">
    <subcellularLocation>
        <location evidence="1">Secreted</location>
    </subcellularLocation>
    <subcellularLocation>
        <location evidence="1">Host cell</location>
    </subcellularLocation>
    <subcellularLocation>
        <location evidence="1">Membrane</location>
        <topology evidence="1">Single-pass membrane protein</topology>
    </subcellularLocation>
    <text evidence="1">Secreted, and delivered into the host cell.</text>
</comment>
<comment type="similarity">
    <text evidence="4">Belongs to the peptidase C48 family.</text>
</comment>
<accession>C4PQR0</accession>
<reference key="1">
    <citation type="journal article" date="2009" name="BMC Genomics">
        <title>Co-evolution of genomes and plasmids within Chlamydia trachomatis and the emergence in Sweden of a new variant strain.</title>
        <authorList>
            <person name="Seth-Smith H.M.B."/>
            <person name="Harris S.R."/>
            <person name="Persson K."/>
            <person name="Marsh P."/>
            <person name="Barron A."/>
            <person name="Bignell A."/>
            <person name="Bjartling C."/>
            <person name="Clark L."/>
            <person name="Cutcliffe L.T."/>
            <person name="Lambden P.R."/>
            <person name="Lennard N."/>
            <person name="Lockey S.J."/>
            <person name="Quail M.A."/>
            <person name="Salim O."/>
            <person name="Skilton R.J."/>
            <person name="Wang Y."/>
            <person name="Holland M.J."/>
            <person name="Parkhill J."/>
            <person name="Thomson N.R."/>
            <person name="Clarke I.N."/>
        </authorList>
    </citation>
    <scope>NUCLEOTIDE SEQUENCE [LARGE SCALE GENOMIC DNA]</scope>
    <source>
        <strain>Jali20/OT</strain>
    </source>
</reference>
<evidence type="ECO:0000250" key="1"/>
<evidence type="ECO:0000255" key="2"/>
<evidence type="ECO:0000256" key="3">
    <source>
        <dbReference type="SAM" id="MobiDB-lite"/>
    </source>
</evidence>
<evidence type="ECO:0000305" key="4"/>
<name>CDUB1_CHLTJ</name>
<keyword id="KW-0378">Hydrolase</keyword>
<keyword id="KW-0472">Membrane</keyword>
<keyword id="KW-0645">Protease</keyword>
<keyword id="KW-0964">Secreted</keyword>
<keyword id="KW-0788">Thiol protease</keyword>
<keyword id="KW-0812">Transmembrane</keyword>
<keyword id="KW-1133">Transmembrane helix</keyword>
<keyword id="KW-0833">Ubl conjugation pathway</keyword>
<keyword id="KW-0843">Virulence</keyword>
<feature type="chain" id="PRO_0000396491" description="Deubiquitinase and deneddylase Dub1">
    <location>
        <begin position="1"/>
        <end position="418"/>
    </location>
</feature>
<feature type="transmembrane region" description="Helical" evidence="2">
    <location>
        <begin position="40"/>
        <end position="60"/>
    </location>
</feature>
<feature type="region of interest" description="Disordered" evidence="3">
    <location>
        <begin position="1"/>
        <end position="23"/>
    </location>
</feature>
<feature type="region of interest" description="Disordered" evidence="3">
    <location>
        <begin position="72"/>
        <end position="144"/>
    </location>
</feature>
<feature type="compositionally biased region" description="Polar residues" evidence="3">
    <location>
        <begin position="1"/>
        <end position="10"/>
    </location>
</feature>
<feature type="compositionally biased region" description="Pro residues" evidence="3">
    <location>
        <begin position="86"/>
        <end position="141"/>
    </location>
</feature>
<feature type="active site" evidence="2">
    <location>
        <position position="288"/>
    </location>
</feature>
<feature type="active site" evidence="2">
    <location>
        <position position="305"/>
    </location>
</feature>
<feature type="active site" evidence="2">
    <location>
        <position position="358"/>
    </location>
</feature>
<gene>
    <name type="primary">cdu1</name>
    <name type="ordered locus">JALI_8791</name>
</gene>
<sequence>MLSPTNSISKTAPVPPQDSSKPVLISEEPQNQLLQKVARTALAVLLVVVTLGLILLFYSFSDLQSFPWCCQTRPSTKEQPTISIPVPLPSPPLAVPRPSTPPPPVISRPSTPPAPTPAISPPSTPSAPKPSTPPPLPPKAPKPVKTQEDLLPFVPEQVFVEMYEDMARRRIIEALVPAWDSDIIFKCLCYFHTLYPGLIPLETFPPATIFNFKQKIISILEDKKAVLRGEPIKGSLPICCSEENYRRHLQGTTLLPVFMWYHPTPKTLSDTMQTMKQLAIKGSVGASHWLLVIVDIQARRLVYFDSLYNYVMSPEDMKKDLQSFAQQLDQVYPAYDSQIFSVKIAAKEVIQKGSGSSCGAWCCQFLHWYLRDPFTDALNDLPVDSVERHENLASFVQACEAAVQDLPELFWPEAKALF</sequence>